<comment type="function">
    <text evidence="1">Could be a mediator in iron transactions between iron acquisition and iron-requiring processes, such as synthesis and/or repair of Fe-S clusters in biosynthetic enzymes.</text>
</comment>
<comment type="subunit">
    <text evidence="1">Monomer.</text>
</comment>
<comment type="similarity">
    <text evidence="1">Belongs to the Fe(2+)-trafficking protein family.</text>
</comment>
<organism>
    <name type="scientific">Shigella boydii serotype 18 (strain CDC 3083-94 / BS512)</name>
    <dbReference type="NCBI Taxonomy" id="344609"/>
    <lineage>
        <taxon>Bacteria</taxon>
        <taxon>Pseudomonadati</taxon>
        <taxon>Pseudomonadota</taxon>
        <taxon>Gammaproteobacteria</taxon>
        <taxon>Enterobacterales</taxon>
        <taxon>Enterobacteriaceae</taxon>
        <taxon>Shigella</taxon>
    </lineage>
</organism>
<gene>
    <name evidence="1" type="primary">yggX</name>
    <name type="ordered locus">SbBS512_E3395</name>
</gene>
<accession>B2U177</accession>
<proteinExistence type="inferred from homology"/>
<keyword id="KW-0408">Iron</keyword>
<keyword id="KW-1185">Reference proteome</keyword>
<feature type="chain" id="PRO_1000131867" description="Probable Fe(2+)-trafficking protein">
    <location>
        <begin position="1"/>
        <end position="91"/>
    </location>
</feature>
<protein>
    <recommendedName>
        <fullName evidence="1">Probable Fe(2+)-trafficking protein</fullName>
    </recommendedName>
</protein>
<reference key="1">
    <citation type="submission" date="2008-05" db="EMBL/GenBank/DDBJ databases">
        <title>Complete sequence of Shigella boydii serotype 18 strain BS512.</title>
        <authorList>
            <person name="Rasko D.A."/>
            <person name="Rosovitz M."/>
            <person name="Maurelli A.T."/>
            <person name="Myers G."/>
            <person name="Seshadri R."/>
            <person name="Cer R."/>
            <person name="Jiang L."/>
            <person name="Ravel J."/>
            <person name="Sebastian Y."/>
        </authorList>
    </citation>
    <scope>NUCLEOTIDE SEQUENCE [LARGE SCALE GENOMIC DNA]</scope>
    <source>
        <strain>CDC 3083-94 / BS512</strain>
    </source>
</reference>
<sequence length="91" mass="10953">MSRTIFCTFLQREAEGQDFQLYPGELGKRIYNEISKEAWAQWQHKQTMLINEKKLNMMNAEHRKLLEQEMVNFLFEGKEVHIEGYTPEDKK</sequence>
<name>FETP_SHIB3</name>
<evidence type="ECO:0000255" key="1">
    <source>
        <dbReference type="HAMAP-Rule" id="MF_00686"/>
    </source>
</evidence>
<dbReference type="EMBL" id="CP001063">
    <property type="protein sequence ID" value="ACD07342.1"/>
    <property type="molecule type" value="Genomic_DNA"/>
</dbReference>
<dbReference type="RefSeq" id="WP_000091700.1">
    <property type="nucleotide sequence ID" value="NC_010658.1"/>
</dbReference>
<dbReference type="SMR" id="B2U177"/>
<dbReference type="STRING" id="344609.SbBS512_E3395"/>
<dbReference type="KEGG" id="sbc:SbBS512_E3395"/>
<dbReference type="HOGENOM" id="CLU_170994_0_0_6"/>
<dbReference type="Proteomes" id="UP000001030">
    <property type="component" value="Chromosome"/>
</dbReference>
<dbReference type="GO" id="GO:0005829">
    <property type="term" value="C:cytosol"/>
    <property type="evidence" value="ECO:0007669"/>
    <property type="project" value="TreeGrafter"/>
</dbReference>
<dbReference type="GO" id="GO:0005506">
    <property type="term" value="F:iron ion binding"/>
    <property type="evidence" value="ECO:0007669"/>
    <property type="project" value="UniProtKB-UniRule"/>
</dbReference>
<dbReference type="GO" id="GO:0034599">
    <property type="term" value="P:cellular response to oxidative stress"/>
    <property type="evidence" value="ECO:0007669"/>
    <property type="project" value="TreeGrafter"/>
</dbReference>
<dbReference type="FunFam" id="1.10.3880.10:FF:000001">
    <property type="entry name" value="Probable Fe(2+)-trafficking protein"/>
    <property type="match status" value="1"/>
</dbReference>
<dbReference type="Gene3D" id="1.10.3880.10">
    <property type="entry name" value="Fe(II) trafficking protein YggX"/>
    <property type="match status" value="1"/>
</dbReference>
<dbReference type="HAMAP" id="MF_00686">
    <property type="entry name" value="Fe_traffic_YggX"/>
    <property type="match status" value="1"/>
</dbReference>
<dbReference type="InterPro" id="IPR007457">
    <property type="entry name" value="Fe_traffick_prot_YggX"/>
</dbReference>
<dbReference type="InterPro" id="IPR036766">
    <property type="entry name" value="Fe_traffick_prot_YggX_sf"/>
</dbReference>
<dbReference type="NCBIfam" id="NF003817">
    <property type="entry name" value="PRK05408.1"/>
    <property type="match status" value="1"/>
</dbReference>
<dbReference type="PANTHER" id="PTHR36965">
    <property type="entry name" value="FE(2+)-TRAFFICKING PROTEIN-RELATED"/>
    <property type="match status" value="1"/>
</dbReference>
<dbReference type="PANTHER" id="PTHR36965:SF1">
    <property type="entry name" value="FE(2+)-TRAFFICKING PROTEIN-RELATED"/>
    <property type="match status" value="1"/>
</dbReference>
<dbReference type="Pfam" id="PF04362">
    <property type="entry name" value="Iron_traffic"/>
    <property type="match status" value="1"/>
</dbReference>
<dbReference type="PIRSF" id="PIRSF029827">
    <property type="entry name" value="Fe_traffic_YggX"/>
    <property type="match status" value="1"/>
</dbReference>
<dbReference type="SUPFAM" id="SSF111148">
    <property type="entry name" value="YggX-like"/>
    <property type="match status" value="1"/>
</dbReference>